<protein>
    <recommendedName>
        <fullName>Putative magnesium transporter MRS2-H</fullName>
    </recommendedName>
</protein>
<feature type="chain" id="PRO_0000394280" description="Putative magnesium transporter MRS2-H">
    <location>
        <begin position="1"/>
        <end position="435"/>
    </location>
</feature>
<feature type="transmembrane region" description="Helical" evidence="2">
    <location>
        <begin position="369"/>
        <end position="389"/>
    </location>
</feature>
<feature type="transmembrane region" description="Helical" evidence="2">
    <location>
        <begin position="408"/>
        <end position="428"/>
    </location>
</feature>
<feature type="region of interest" description="Disordered" evidence="3">
    <location>
        <begin position="19"/>
        <end position="54"/>
    </location>
</feature>
<proteinExistence type="inferred from homology"/>
<sequence length="435" mass="48687">MALPCAFLSAAAAANATSFSSSPESRRCRSVHRVPSRPRPPLAPPARVMGKGNSKRKAANTRLWMRLDRRGGCEMILCDKSFVARRSGLPARDLRVLGPLLSRSPSILAREKAMVINLEFVRAIVTADEVLVLEPLAQEVLPFVEKLRKHFPLKSLDVDDVSTHMHTENQDGELAQDVSCYEVEGANHELPFEFQVLDFALEAVCLSYNSTISDLNRSAIAVLDDLMKSVSTRNLERVRSLKSSLTRLLASVQKVRDEVEHILDDNEAMAHLCTARKTKGQKDLLNTILFPETRLCRTHSSIENSTGIRTCVPSDSDAHILDMLLEAYFKQLDGIRNRIFLVRQYIVDTEDYISIQLDNKRNELLGLQLTLIIASFGIAINTFIAAAFAMNIPHRGYHFVIGVPFGQFVGATSFLCMSIVILLFTYAWRNRLLCT</sequence>
<name>MRS2H_ORYSI</name>
<keyword id="KW-0406">Ion transport</keyword>
<keyword id="KW-0460">Magnesium</keyword>
<keyword id="KW-0472">Membrane</keyword>
<keyword id="KW-1185">Reference proteome</keyword>
<keyword id="KW-0812">Transmembrane</keyword>
<keyword id="KW-1133">Transmembrane helix</keyword>
<keyword id="KW-0813">Transport</keyword>
<gene>
    <name type="primary">MRS2-H</name>
    <name type="ORF">OsI_09927</name>
</gene>
<comment type="function">
    <text evidence="1">Putative magnesium transporter.</text>
</comment>
<comment type="subcellular location">
    <subcellularLocation>
        <location evidence="1">Membrane</location>
        <topology evidence="1">Multi-pass membrane protein</topology>
    </subcellularLocation>
</comment>
<comment type="similarity">
    <text evidence="4">Belongs to the CorA metal ion transporter (MIT) (TC 1.A.35.5) family.</text>
</comment>
<comment type="caution">
    <text evidence="4">Lacks the GMN motif, which is a conserved feature of the family.</text>
</comment>
<reference key="1">
    <citation type="journal article" date="2005" name="PLoS Biol.">
        <title>The genomes of Oryza sativa: a history of duplications.</title>
        <authorList>
            <person name="Yu J."/>
            <person name="Wang J."/>
            <person name="Lin W."/>
            <person name="Li S."/>
            <person name="Li H."/>
            <person name="Zhou J."/>
            <person name="Ni P."/>
            <person name="Dong W."/>
            <person name="Hu S."/>
            <person name="Zeng C."/>
            <person name="Zhang J."/>
            <person name="Zhang Y."/>
            <person name="Li R."/>
            <person name="Xu Z."/>
            <person name="Li S."/>
            <person name="Li X."/>
            <person name="Zheng H."/>
            <person name="Cong L."/>
            <person name="Lin L."/>
            <person name="Yin J."/>
            <person name="Geng J."/>
            <person name="Li G."/>
            <person name="Shi J."/>
            <person name="Liu J."/>
            <person name="Lv H."/>
            <person name="Li J."/>
            <person name="Wang J."/>
            <person name="Deng Y."/>
            <person name="Ran L."/>
            <person name="Shi X."/>
            <person name="Wang X."/>
            <person name="Wu Q."/>
            <person name="Li C."/>
            <person name="Ren X."/>
            <person name="Wang J."/>
            <person name="Wang X."/>
            <person name="Li D."/>
            <person name="Liu D."/>
            <person name="Zhang X."/>
            <person name="Ji Z."/>
            <person name="Zhao W."/>
            <person name="Sun Y."/>
            <person name="Zhang Z."/>
            <person name="Bao J."/>
            <person name="Han Y."/>
            <person name="Dong L."/>
            <person name="Ji J."/>
            <person name="Chen P."/>
            <person name="Wu S."/>
            <person name="Liu J."/>
            <person name="Xiao Y."/>
            <person name="Bu D."/>
            <person name="Tan J."/>
            <person name="Yang L."/>
            <person name="Ye C."/>
            <person name="Zhang J."/>
            <person name="Xu J."/>
            <person name="Zhou Y."/>
            <person name="Yu Y."/>
            <person name="Zhang B."/>
            <person name="Zhuang S."/>
            <person name="Wei H."/>
            <person name="Liu B."/>
            <person name="Lei M."/>
            <person name="Yu H."/>
            <person name="Li Y."/>
            <person name="Xu H."/>
            <person name="Wei S."/>
            <person name="He X."/>
            <person name="Fang L."/>
            <person name="Zhang Z."/>
            <person name="Zhang Y."/>
            <person name="Huang X."/>
            <person name="Su Z."/>
            <person name="Tong W."/>
            <person name="Li J."/>
            <person name="Tong Z."/>
            <person name="Li S."/>
            <person name="Ye J."/>
            <person name="Wang L."/>
            <person name="Fang L."/>
            <person name="Lei T."/>
            <person name="Chen C.-S."/>
            <person name="Chen H.-C."/>
            <person name="Xu Z."/>
            <person name="Li H."/>
            <person name="Huang H."/>
            <person name="Zhang F."/>
            <person name="Xu H."/>
            <person name="Li N."/>
            <person name="Zhao C."/>
            <person name="Li S."/>
            <person name="Dong L."/>
            <person name="Huang Y."/>
            <person name="Li L."/>
            <person name="Xi Y."/>
            <person name="Qi Q."/>
            <person name="Li W."/>
            <person name="Zhang B."/>
            <person name="Hu W."/>
            <person name="Zhang Y."/>
            <person name="Tian X."/>
            <person name="Jiao Y."/>
            <person name="Liang X."/>
            <person name="Jin J."/>
            <person name="Gao L."/>
            <person name="Zheng W."/>
            <person name="Hao B."/>
            <person name="Liu S.-M."/>
            <person name="Wang W."/>
            <person name="Yuan L."/>
            <person name="Cao M."/>
            <person name="McDermott J."/>
            <person name="Samudrala R."/>
            <person name="Wang J."/>
            <person name="Wong G.K.-S."/>
            <person name="Yang H."/>
        </authorList>
    </citation>
    <scope>NUCLEOTIDE SEQUENCE [LARGE SCALE GENOMIC DNA]</scope>
    <source>
        <strain>cv. 93-11</strain>
    </source>
</reference>
<dbReference type="EMBL" id="CM000128">
    <property type="protein sequence ID" value="EAY88460.1"/>
    <property type="molecule type" value="Genomic_DNA"/>
</dbReference>
<dbReference type="SMR" id="A2XCA0"/>
<dbReference type="EnsemblPlants" id="BGIOSGA011490-TA">
    <property type="protein sequence ID" value="BGIOSGA011490-PA"/>
    <property type="gene ID" value="BGIOSGA011490"/>
</dbReference>
<dbReference type="EnsemblPlants" id="OsGoSa_03g0002930.01">
    <property type="protein sequence ID" value="OsGoSa_03g0002930.01"/>
    <property type="gene ID" value="OsGoSa_03g0002930"/>
</dbReference>
<dbReference type="EnsemblPlants" id="OsIR64_03g0002880.01">
    <property type="protein sequence ID" value="OsIR64_03g0002880.01"/>
    <property type="gene ID" value="OsIR64_03g0002880"/>
</dbReference>
<dbReference type="EnsemblPlants" id="OsKYG_03g0002960.01">
    <property type="protein sequence ID" value="OsKYG_03g0002960.01"/>
    <property type="gene ID" value="OsKYG_03g0002960"/>
</dbReference>
<dbReference type="EnsemblPlants" id="OsLaMu_03g0002950.01">
    <property type="protein sequence ID" value="OsLaMu_03g0002950.01"/>
    <property type="gene ID" value="OsLaMu_03g0002950"/>
</dbReference>
<dbReference type="EnsemblPlants" id="OsLima_03g0002970.01">
    <property type="protein sequence ID" value="OsLima_03g0002970.01"/>
    <property type="gene ID" value="OsLima_03g0002970"/>
</dbReference>
<dbReference type="EnsemblPlants" id="OsLiXu_03g0003000.01">
    <property type="protein sequence ID" value="OsLiXu_03g0003000.01"/>
    <property type="gene ID" value="OsLiXu_03g0003000"/>
</dbReference>
<dbReference type="EnsemblPlants" id="OsMH63_03G002890_01">
    <property type="protein sequence ID" value="OsMH63_03G002890_01"/>
    <property type="gene ID" value="OsMH63_03G002890"/>
</dbReference>
<dbReference type="EnsemblPlants" id="OsPr106_03g0002960.01">
    <property type="protein sequence ID" value="OsPr106_03g0002960.01"/>
    <property type="gene ID" value="OsPr106_03g0002960"/>
</dbReference>
<dbReference type="EnsemblPlants" id="OsZS97_03G002880_01">
    <property type="protein sequence ID" value="OsZS97_03G002880_01"/>
    <property type="gene ID" value="OsZS97_03G002880"/>
</dbReference>
<dbReference type="Gramene" id="BGIOSGA011490-TA">
    <property type="protein sequence ID" value="BGIOSGA011490-PA"/>
    <property type="gene ID" value="BGIOSGA011490"/>
</dbReference>
<dbReference type="Gramene" id="OsGoSa_03g0002930.01">
    <property type="protein sequence ID" value="OsGoSa_03g0002930.01"/>
    <property type="gene ID" value="OsGoSa_03g0002930"/>
</dbReference>
<dbReference type="Gramene" id="OsIR64_03g0002880.01">
    <property type="protein sequence ID" value="OsIR64_03g0002880.01"/>
    <property type="gene ID" value="OsIR64_03g0002880"/>
</dbReference>
<dbReference type="Gramene" id="OsKYG_03g0002960.01">
    <property type="protein sequence ID" value="OsKYG_03g0002960.01"/>
    <property type="gene ID" value="OsKYG_03g0002960"/>
</dbReference>
<dbReference type="Gramene" id="OsLaMu_03g0002950.01">
    <property type="protein sequence ID" value="OsLaMu_03g0002950.01"/>
    <property type="gene ID" value="OsLaMu_03g0002950"/>
</dbReference>
<dbReference type="Gramene" id="OsLima_03g0002970.01">
    <property type="protein sequence ID" value="OsLima_03g0002970.01"/>
    <property type="gene ID" value="OsLima_03g0002970"/>
</dbReference>
<dbReference type="Gramene" id="OsLiXu_03g0003000.01">
    <property type="protein sequence ID" value="OsLiXu_03g0003000.01"/>
    <property type="gene ID" value="OsLiXu_03g0003000"/>
</dbReference>
<dbReference type="Gramene" id="OsMH63_03G002890_01">
    <property type="protein sequence ID" value="OsMH63_03G002890_01"/>
    <property type="gene ID" value="OsMH63_03G002890"/>
</dbReference>
<dbReference type="Gramene" id="OsPr106_03g0002960.01">
    <property type="protein sequence ID" value="OsPr106_03g0002960.01"/>
    <property type="gene ID" value="OsPr106_03g0002960"/>
</dbReference>
<dbReference type="Gramene" id="OsZS97_03G002880_01">
    <property type="protein sequence ID" value="OsZS97_03G002880_01"/>
    <property type="gene ID" value="OsZS97_03G002880"/>
</dbReference>
<dbReference type="HOGENOM" id="CLU_034694_1_0_1"/>
<dbReference type="OMA" id="FAMNIPH"/>
<dbReference type="OrthoDB" id="10251508at2759"/>
<dbReference type="Proteomes" id="UP000007015">
    <property type="component" value="Chromosome 3"/>
</dbReference>
<dbReference type="GO" id="GO:0016020">
    <property type="term" value="C:membrane"/>
    <property type="evidence" value="ECO:0007669"/>
    <property type="project" value="UniProtKB-SubCell"/>
</dbReference>
<dbReference type="GO" id="GO:0015095">
    <property type="term" value="F:magnesium ion transmembrane transporter activity"/>
    <property type="evidence" value="ECO:0007669"/>
    <property type="project" value="TreeGrafter"/>
</dbReference>
<dbReference type="CDD" id="cd12823">
    <property type="entry name" value="Mrs2_Mfm1p-like"/>
    <property type="match status" value="1"/>
</dbReference>
<dbReference type="FunFam" id="2.40.128.330:FF:000001">
    <property type="entry name" value="Magnesium transporter MRS2-1"/>
    <property type="match status" value="1"/>
</dbReference>
<dbReference type="FunFam" id="1.20.58.340:FF:000015">
    <property type="entry name" value="magnesium transporter MRS2-4"/>
    <property type="match status" value="1"/>
</dbReference>
<dbReference type="Gene3D" id="2.40.128.330">
    <property type="match status" value="1"/>
</dbReference>
<dbReference type="Gene3D" id="1.20.58.340">
    <property type="entry name" value="Magnesium transport protein CorA, transmembrane region"/>
    <property type="match status" value="1"/>
</dbReference>
<dbReference type="InterPro" id="IPR039204">
    <property type="entry name" value="MRS2-like"/>
</dbReference>
<dbReference type="PANTHER" id="PTHR13890:SF36">
    <property type="entry name" value="MAGNESIUM TRANSPORTER MRS2-H-RELATED"/>
    <property type="match status" value="1"/>
</dbReference>
<dbReference type="PANTHER" id="PTHR13890">
    <property type="entry name" value="RNA SPLICING PROTEIN MRS2, MITOCHONDRIAL"/>
    <property type="match status" value="1"/>
</dbReference>
<dbReference type="Pfam" id="PF22099">
    <property type="entry name" value="MRS2-like"/>
    <property type="match status" value="1"/>
</dbReference>
<organism>
    <name type="scientific">Oryza sativa subsp. indica</name>
    <name type="common">Rice</name>
    <dbReference type="NCBI Taxonomy" id="39946"/>
    <lineage>
        <taxon>Eukaryota</taxon>
        <taxon>Viridiplantae</taxon>
        <taxon>Streptophyta</taxon>
        <taxon>Embryophyta</taxon>
        <taxon>Tracheophyta</taxon>
        <taxon>Spermatophyta</taxon>
        <taxon>Magnoliopsida</taxon>
        <taxon>Liliopsida</taxon>
        <taxon>Poales</taxon>
        <taxon>Poaceae</taxon>
        <taxon>BOP clade</taxon>
        <taxon>Oryzoideae</taxon>
        <taxon>Oryzeae</taxon>
        <taxon>Oryzinae</taxon>
        <taxon>Oryza</taxon>
        <taxon>Oryza sativa</taxon>
    </lineage>
</organism>
<evidence type="ECO:0000250" key="1"/>
<evidence type="ECO:0000255" key="2"/>
<evidence type="ECO:0000256" key="3">
    <source>
        <dbReference type="SAM" id="MobiDB-lite"/>
    </source>
</evidence>
<evidence type="ECO:0000305" key="4"/>
<accession>A2XCA0</accession>